<feature type="chain" id="PRO_1000045523" description="Fumarate reductase subunit C">
    <location>
        <begin position="1"/>
        <end position="131"/>
    </location>
</feature>
<feature type="transmembrane region" description="Helical" evidence="1">
    <location>
        <begin position="30"/>
        <end position="50"/>
    </location>
</feature>
<feature type="transmembrane region" description="Helical" evidence="1">
    <location>
        <begin position="63"/>
        <end position="83"/>
    </location>
</feature>
<feature type="transmembrane region" description="Helical" evidence="1">
    <location>
        <begin position="109"/>
        <end position="129"/>
    </location>
</feature>
<evidence type="ECO:0000255" key="1">
    <source>
        <dbReference type="HAMAP-Rule" id="MF_00708"/>
    </source>
</evidence>
<gene>
    <name evidence="1" type="primary">frdC</name>
    <name type="ordered locus">Ecok1_42060</name>
    <name type="ORF">APECO1_2237</name>
</gene>
<reference key="1">
    <citation type="journal article" date="2007" name="J. Bacteriol.">
        <title>The genome sequence of avian pathogenic Escherichia coli strain O1:K1:H7 shares strong similarities with human extraintestinal pathogenic E. coli genomes.</title>
        <authorList>
            <person name="Johnson T.J."/>
            <person name="Kariyawasam S."/>
            <person name="Wannemuehler Y."/>
            <person name="Mangiamele P."/>
            <person name="Johnson S.J."/>
            <person name="Doetkott C."/>
            <person name="Skyberg J.A."/>
            <person name="Lynne A.M."/>
            <person name="Johnson J.R."/>
            <person name="Nolan L.K."/>
        </authorList>
    </citation>
    <scope>NUCLEOTIDE SEQUENCE [LARGE SCALE GENOMIC DNA]</scope>
</reference>
<proteinExistence type="inferred from homology"/>
<sequence>MTTKRKPYVRPMTSTWWKKLPFYRFYMLREGTAVPAVWFSIELIFGLFALKNGPEAWAGFVDFLQNPVIVIINLITLAAALLHTKTWFELAPKAANIIVKDEKMGPEPIIKSLWAVTVVATIVILFVALYW</sequence>
<keyword id="KW-0997">Cell inner membrane</keyword>
<keyword id="KW-1003">Cell membrane</keyword>
<keyword id="KW-0472">Membrane</keyword>
<keyword id="KW-1185">Reference proteome</keyword>
<keyword id="KW-0812">Transmembrane</keyword>
<keyword id="KW-1133">Transmembrane helix</keyword>
<protein>
    <recommendedName>
        <fullName evidence="1">Fumarate reductase subunit C</fullName>
    </recommendedName>
    <alternativeName>
        <fullName evidence="1">Fumarate reductase 15 kDa hydrophobic protein</fullName>
    </alternativeName>
    <alternativeName>
        <fullName evidence="1">Quinol-fumarate reductase subunit C</fullName>
        <shortName evidence="1">QFR subunit C</shortName>
    </alternativeName>
</protein>
<name>FRDC_ECOK1</name>
<accession>A1AJ60</accession>
<dbReference type="EMBL" id="CP000468">
    <property type="protein sequence ID" value="ABJ03700.1"/>
    <property type="molecule type" value="Genomic_DNA"/>
</dbReference>
<dbReference type="RefSeq" id="WP_000208757.1">
    <property type="nucleotide sequence ID" value="NZ_CADILS010000036.1"/>
</dbReference>
<dbReference type="SMR" id="A1AJ60"/>
<dbReference type="GeneID" id="93777670"/>
<dbReference type="KEGG" id="ecv:APECO1_2237"/>
<dbReference type="HOGENOM" id="CLU_156492_0_0_6"/>
<dbReference type="Proteomes" id="UP000008216">
    <property type="component" value="Chromosome"/>
</dbReference>
<dbReference type="GO" id="GO:0045283">
    <property type="term" value="C:fumarate reductase complex"/>
    <property type="evidence" value="ECO:0007669"/>
    <property type="project" value="UniProtKB-UniRule"/>
</dbReference>
<dbReference type="GO" id="GO:0005886">
    <property type="term" value="C:plasma membrane"/>
    <property type="evidence" value="ECO:0007669"/>
    <property type="project" value="UniProtKB-SubCell"/>
</dbReference>
<dbReference type="GO" id="GO:0000104">
    <property type="term" value="F:succinate dehydrogenase activity"/>
    <property type="evidence" value="ECO:0007669"/>
    <property type="project" value="UniProtKB-UniRule"/>
</dbReference>
<dbReference type="CDD" id="cd00546">
    <property type="entry name" value="QFR_TypeD_subunitC"/>
    <property type="match status" value="1"/>
</dbReference>
<dbReference type="FunFam" id="1.20.1300.10:FF:000003">
    <property type="entry name" value="Fumarate reductase subunit C"/>
    <property type="match status" value="1"/>
</dbReference>
<dbReference type="Gene3D" id="1.20.1300.10">
    <property type="entry name" value="Fumarate reductase/succinate dehydrogenase, transmembrane subunit"/>
    <property type="match status" value="1"/>
</dbReference>
<dbReference type="HAMAP" id="MF_00708">
    <property type="entry name" value="Fumarate_red_C"/>
    <property type="match status" value="1"/>
</dbReference>
<dbReference type="InterPro" id="IPR003510">
    <property type="entry name" value="Fumarate_red_C"/>
</dbReference>
<dbReference type="InterPro" id="IPR034804">
    <property type="entry name" value="SQR/QFR_C/D"/>
</dbReference>
<dbReference type="NCBIfam" id="NF003445">
    <property type="entry name" value="PRK04987.1"/>
    <property type="match status" value="1"/>
</dbReference>
<dbReference type="Pfam" id="PF02300">
    <property type="entry name" value="Fumarate_red_C"/>
    <property type="match status" value="1"/>
</dbReference>
<dbReference type="PIRSF" id="PIRSF000180">
    <property type="entry name" value="FrdC"/>
    <property type="match status" value="1"/>
</dbReference>
<dbReference type="SUPFAM" id="SSF81343">
    <property type="entry name" value="Fumarate reductase respiratory complex transmembrane subunits"/>
    <property type="match status" value="1"/>
</dbReference>
<organism>
    <name type="scientific">Escherichia coli O1:K1 / APEC</name>
    <dbReference type="NCBI Taxonomy" id="405955"/>
    <lineage>
        <taxon>Bacteria</taxon>
        <taxon>Pseudomonadati</taxon>
        <taxon>Pseudomonadota</taxon>
        <taxon>Gammaproteobacteria</taxon>
        <taxon>Enterobacterales</taxon>
        <taxon>Enterobacteriaceae</taxon>
        <taxon>Escherichia</taxon>
    </lineage>
</organism>
<comment type="function">
    <text evidence="1">Two distinct, membrane-bound, FAD-containing enzymes are responsible for the catalysis of fumarate and succinate interconversion; fumarate reductase is used in anaerobic growth, and succinate dehydrogenase is used in aerobic growth. Anchors the catalytic components of the fumarate reductase complex to the cell inner membrane, binds quinones.</text>
</comment>
<comment type="subunit">
    <text evidence="1">Part of an enzyme complex containing four subunits: a flavoprotein (FrdA), an iron-sulfur protein (FrdB), and two hydrophobic anchor proteins (FrdC and FrdD).</text>
</comment>
<comment type="subcellular location">
    <subcellularLocation>
        <location evidence="1">Cell inner membrane</location>
        <topology evidence="1">Multi-pass membrane protein</topology>
    </subcellularLocation>
</comment>
<comment type="similarity">
    <text evidence="1">Belongs to the FrdC family.</text>
</comment>